<dbReference type="EMBL" id="AY091855">
    <property type="protein sequence ID" value="AAM26736.1"/>
    <property type="molecule type" value="mRNA"/>
</dbReference>
<dbReference type="EMBL" id="AF061056">
    <property type="protein sequence ID" value="AAD05436.1"/>
    <property type="molecule type" value="mRNA"/>
</dbReference>
<dbReference type="EMBL" id="AF084644">
    <property type="protein sequence ID" value="AAC64557.1"/>
    <property type="molecule type" value="mRNA"/>
</dbReference>
<dbReference type="EMBL" id="AF084645">
    <property type="protein sequence ID" value="AAC64558.1"/>
    <property type="molecule type" value="mRNA"/>
</dbReference>
<dbReference type="EMBL" id="AF364606">
    <property type="protein sequence ID" value="AAK38720.1"/>
    <property type="molecule type" value="Genomic_DNA"/>
</dbReference>
<dbReference type="EMBL" id="AF364606">
    <property type="protein sequence ID" value="AAK38721.1"/>
    <property type="molecule type" value="Genomic_DNA"/>
</dbReference>
<dbReference type="EMBL" id="AF364606">
    <property type="protein sequence ID" value="AAK38722.1"/>
    <property type="molecule type" value="Genomic_DNA"/>
</dbReference>
<dbReference type="EMBL" id="AJ009936">
    <property type="protein sequence ID" value="CAB55489.1"/>
    <property type="molecule type" value="mRNA"/>
</dbReference>
<dbReference type="EMBL" id="AJ009936">
    <property type="protein sequence ID" value="CAB55490.1"/>
    <property type="molecule type" value="mRNA"/>
</dbReference>
<dbReference type="EMBL" id="AJ009936">
    <property type="protein sequence ID" value="CAB55491.1"/>
    <property type="molecule type" value="mRNA"/>
</dbReference>
<dbReference type="EMBL" id="AJ009937">
    <property type="protein sequence ID" value="CAB55492.1"/>
    <property type="molecule type" value="mRNA"/>
</dbReference>
<dbReference type="EMBL" id="AJ009937">
    <property type="protein sequence ID" value="CAB55493.1"/>
    <property type="molecule type" value="mRNA"/>
</dbReference>
<dbReference type="EMBL" id="AJ009937">
    <property type="protein sequence ID" value="CAB55494.1"/>
    <property type="molecule type" value="mRNA"/>
</dbReference>
<dbReference type="EMBL" id="DQ911122">
    <property type="protein sequence ID" value="ABJ52965.1"/>
    <property type="molecule type" value="Genomic_DNA"/>
</dbReference>
<dbReference type="EMBL" id="DQ923326">
    <property type="protein sequence ID" value="ABJ52966.1"/>
    <property type="molecule type" value="Genomic_DNA"/>
</dbReference>
<dbReference type="EMBL" id="EF614253">
    <property type="protein sequence ID" value="ABR09276.1"/>
    <property type="molecule type" value="Genomic_DNA"/>
</dbReference>
<dbReference type="EMBL" id="BC017304">
    <property type="protein sequence ID" value="AAH17304.2"/>
    <property type="molecule type" value="mRNA"/>
</dbReference>
<dbReference type="CCDS" id="CCDS2995.1">
    <molecule id="O75469-7"/>
</dbReference>
<dbReference type="CCDS" id="CCDS43136.1">
    <molecule id="O75469-1"/>
</dbReference>
<dbReference type="CCDS" id="CCDS54627.1">
    <molecule id="O75469-4"/>
</dbReference>
<dbReference type="RefSeq" id="NP_003880.3">
    <molecule id="O75469-1"/>
    <property type="nucleotide sequence ID" value="NM_003889.3"/>
</dbReference>
<dbReference type="RefSeq" id="NP_071285.1">
    <molecule id="O75469-7"/>
    <property type="nucleotide sequence ID" value="NM_022002.3"/>
</dbReference>
<dbReference type="RefSeq" id="NP_148934.1">
    <molecule id="O75469-4"/>
    <property type="nucleotide sequence ID" value="NM_033013.3"/>
</dbReference>
<dbReference type="PDB" id="1ILG">
    <property type="method" value="X-ray"/>
    <property type="resolution" value="2.52 A"/>
    <property type="chains" value="A=130-434"/>
</dbReference>
<dbReference type="PDB" id="1ILH">
    <property type="method" value="X-ray"/>
    <property type="resolution" value="2.76 A"/>
    <property type="chains" value="A=130-434"/>
</dbReference>
<dbReference type="PDB" id="1M13">
    <property type="method" value="X-ray"/>
    <property type="resolution" value="2.15 A"/>
    <property type="chains" value="A=130-434"/>
</dbReference>
<dbReference type="PDB" id="1NRL">
    <property type="method" value="X-ray"/>
    <property type="resolution" value="2.00 A"/>
    <property type="chains" value="A/B=130-434"/>
</dbReference>
<dbReference type="PDB" id="1SKX">
    <property type="method" value="X-ray"/>
    <property type="resolution" value="2.80 A"/>
    <property type="chains" value="A=130-431"/>
</dbReference>
<dbReference type="PDB" id="2O9I">
    <property type="method" value="X-ray"/>
    <property type="resolution" value="2.80 A"/>
    <property type="chains" value="A/B=142-434"/>
</dbReference>
<dbReference type="PDB" id="2QNV">
    <property type="method" value="X-ray"/>
    <property type="resolution" value="2.80 A"/>
    <property type="chains" value="A=130-434"/>
</dbReference>
<dbReference type="PDB" id="3CTB">
    <property type="method" value="X-ray"/>
    <property type="resolution" value="2.00 A"/>
    <property type="chains" value="A/B=130-434"/>
</dbReference>
<dbReference type="PDB" id="3HVL">
    <property type="method" value="X-ray"/>
    <property type="resolution" value="2.10 A"/>
    <property type="chains" value="A/B=130-434"/>
</dbReference>
<dbReference type="PDB" id="3R8D">
    <property type="method" value="X-ray"/>
    <property type="resolution" value="2.80 A"/>
    <property type="chains" value="A=130-434"/>
</dbReference>
<dbReference type="PDB" id="4J5W">
    <property type="method" value="X-ray"/>
    <property type="resolution" value="2.80 A"/>
    <property type="chains" value="A/B=130-434"/>
</dbReference>
<dbReference type="PDB" id="4J5X">
    <property type="method" value="X-ray"/>
    <property type="resolution" value="2.80 A"/>
    <property type="chains" value="A/B=130-434"/>
</dbReference>
<dbReference type="PDB" id="4NY9">
    <property type="method" value="X-ray"/>
    <property type="resolution" value="2.80 A"/>
    <property type="chains" value="A=142-431"/>
</dbReference>
<dbReference type="PDB" id="4S0S">
    <property type="method" value="X-ray"/>
    <property type="resolution" value="2.80 A"/>
    <property type="chains" value="A/B=130-434"/>
</dbReference>
<dbReference type="PDB" id="4S0T">
    <property type="method" value="X-ray"/>
    <property type="resolution" value="3.14 A"/>
    <property type="chains" value="A/B=130-434"/>
</dbReference>
<dbReference type="PDB" id="4X1F">
    <property type="method" value="X-ray"/>
    <property type="resolution" value="2.00 A"/>
    <property type="chains" value="A=130-434"/>
</dbReference>
<dbReference type="PDB" id="4X1G">
    <property type="method" value="X-ray"/>
    <property type="resolution" value="2.25 A"/>
    <property type="chains" value="A=130-434"/>
</dbReference>
<dbReference type="PDB" id="4XAO">
    <property type="method" value="X-ray"/>
    <property type="resolution" value="2.58 A"/>
    <property type="chains" value="A=130-434"/>
</dbReference>
<dbReference type="PDB" id="4XHD">
    <property type="method" value="X-ray"/>
    <property type="resolution" value="2.40 A"/>
    <property type="chains" value="A=130-434"/>
</dbReference>
<dbReference type="PDB" id="5A86">
    <property type="method" value="X-ray"/>
    <property type="resolution" value="2.25 A"/>
    <property type="chains" value="A/B=130-432"/>
</dbReference>
<dbReference type="PDB" id="5X0R">
    <property type="method" value="X-ray"/>
    <property type="resolution" value="2.67 A"/>
    <property type="chains" value="A/B=130-434"/>
</dbReference>
<dbReference type="PDB" id="6BNS">
    <property type="method" value="X-ray"/>
    <property type="resolution" value="2.56 A"/>
    <property type="chains" value="A/B=130-434"/>
</dbReference>
<dbReference type="PDB" id="6DUP">
    <property type="method" value="X-ray"/>
    <property type="resolution" value="2.30 A"/>
    <property type="chains" value="A/B=130-426"/>
</dbReference>
<dbReference type="PDB" id="6HJ2">
    <property type="method" value="X-ray"/>
    <property type="resolution" value="2.28 A"/>
    <property type="chains" value="A=130-434"/>
</dbReference>
<dbReference type="PDB" id="6HTY">
    <property type="method" value="X-ray"/>
    <property type="resolution" value="2.22 A"/>
    <property type="chains" value="A/B=129-434"/>
</dbReference>
<dbReference type="PDB" id="6NX1">
    <property type="method" value="X-ray"/>
    <property type="resolution" value="2.27 A"/>
    <property type="chains" value="A/B=130-434"/>
</dbReference>
<dbReference type="PDB" id="6P2B">
    <property type="method" value="X-ray"/>
    <property type="resolution" value="2.30 A"/>
    <property type="chains" value="A/B=130-434"/>
</dbReference>
<dbReference type="PDB" id="6S41">
    <property type="method" value="X-ray"/>
    <property type="resolution" value="2.70 A"/>
    <property type="chains" value="A/B=138-434"/>
</dbReference>
<dbReference type="PDB" id="6TFI">
    <property type="method" value="X-ray"/>
    <property type="resolution" value="1.85 A"/>
    <property type="chains" value="A/B=129-434"/>
</dbReference>
<dbReference type="PDB" id="6XP9">
    <property type="method" value="X-ray"/>
    <property type="resolution" value="2.27 A"/>
    <property type="chains" value="A/B=130-434"/>
</dbReference>
<dbReference type="PDB" id="7AX8">
    <property type="method" value="X-ray"/>
    <property type="resolution" value="2.15 A"/>
    <property type="chains" value="A=130-434"/>
</dbReference>
<dbReference type="PDB" id="7AX9">
    <property type="method" value="X-ray"/>
    <property type="resolution" value="2.25 A"/>
    <property type="chains" value="A=130-434"/>
</dbReference>
<dbReference type="PDB" id="7AXA">
    <property type="method" value="X-ray"/>
    <property type="resolution" value="2.26 A"/>
    <property type="chains" value="A=130-434"/>
</dbReference>
<dbReference type="PDB" id="7AXB">
    <property type="method" value="X-ray"/>
    <property type="resolution" value="2.55 A"/>
    <property type="chains" value="A=130-434"/>
</dbReference>
<dbReference type="PDB" id="7AXC">
    <property type="method" value="X-ray"/>
    <property type="resolution" value="2.05 A"/>
    <property type="chains" value="A=130-434"/>
</dbReference>
<dbReference type="PDB" id="7AXD">
    <property type="method" value="X-ray"/>
    <property type="resolution" value="2.65 A"/>
    <property type="chains" value="A=130-434"/>
</dbReference>
<dbReference type="PDB" id="7AXE">
    <property type="method" value="X-ray"/>
    <property type="resolution" value="1.90 A"/>
    <property type="chains" value="A=130-434"/>
</dbReference>
<dbReference type="PDB" id="7AXF">
    <property type="method" value="X-ray"/>
    <property type="resolution" value="2.45 A"/>
    <property type="chains" value="A=130-434"/>
</dbReference>
<dbReference type="PDB" id="7AXG">
    <property type="method" value="X-ray"/>
    <property type="resolution" value="2.70 A"/>
    <property type="chains" value="A=130-434"/>
</dbReference>
<dbReference type="PDB" id="7AXH">
    <property type="method" value="X-ray"/>
    <property type="resolution" value="2.55 A"/>
    <property type="chains" value="A=130-434"/>
</dbReference>
<dbReference type="PDB" id="7AXI">
    <property type="method" value="X-ray"/>
    <property type="resolution" value="2.15 A"/>
    <property type="chains" value="A=130-434"/>
</dbReference>
<dbReference type="PDB" id="7AXJ">
    <property type="method" value="X-ray"/>
    <property type="resolution" value="2.30 A"/>
    <property type="chains" value="A=130-434"/>
</dbReference>
<dbReference type="PDB" id="7AXK">
    <property type="method" value="X-ray"/>
    <property type="resolution" value="2.00 A"/>
    <property type="chains" value="A=130-434"/>
</dbReference>
<dbReference type="PDB" id="7AXL">
    <property type="method" value="X-ray"/>
    <property type="resolution" value="2.50 A"/>
    <property type="chains" value="A=130-434"/>
</dbReference>
<dbReference type="PDB" id="7N2A">
    <property type="method" value="X-ray"/>
    <property type="resolution" value="2.26 A"/>
    <property type="chains" value="A=137-434"/>
</dbReference>
<dbReference type="PDB" id="7RIO">
    <property type="method" value="X-ray"/>
    <property type="resolution" value="2.48 A"/>
    <property type="chains" value="A=137-434"/>
</dbReference>
<dbReference type="PDB" id="7RIU">
    <property type="method" value="X-ray"/>
    <property type="resolution" value="2.05 A"/>
    <property type="chains" value="A=137-434"/>
</dbReference>
<dbReference type="PDB" id="7RIV">
    <property type="method" value="X-ray"/>
    <property type="resolution" value="2.20 A"/>
    <property type="chains" value="A=137-434"/>
</dbReference>
<dbReference type="PDB" id="7YFK">
    <property type="method" value="X-ray"/>
    <property type="resolution" value="2.10 A"/>
    <property type="chains" value="A/B=130-434"/>
</dbReference>
<dbReference type="PDB" id="8CCT">
    <property type="method" value="X-ray"/>
    <property type="resolution" value="2.90 A"/>
    <property type="chains" value="A=130-434"/>
</dbReference>
<dbReference type="PDB" id="8CF9">
    <property type="method" value="X-ray"/>
    <property type="resolution" value="2.00 A"/>
    <property type="chains" value="A=130-434"/>
</dbReference>
<dbReference type="PDB" id="8CH8">
    <property type="method" value="X-ray"/>
    <property type="resolution" value="2.15 A"/>
    <property type="chains" value="A=130-434"/>
</dbReference>
<dbReference type="PDB" id="8E3N">
    <property type="method" value="X-ray"/>
    <property type="resolution" value="2.25 A"/>
    <property type="chains" value="A=130-434"/>
</dbReference>
<dbReference type="PDB" id="8EQZ">
    <property type="method" value="X-ray"/>
    <property type="resolution" value="2.37 A"/>
    <property type="chains" value="A/B=130-434"/>
</dbReference>
<dbReference type="PDB" id="8F5Y">
    <property type="method" value="X-ray"/>
    <property type="resolution" value="2.15 A"/>
    <property type="chains" value="A/B=130-434"/>
</dbReference>
<dbReference type="PDB" id="8FPE">
    <property type="method" value="X-ray"/>
    <property type="resolution" value="2.30 A"/>
    <property type="chains" value="A=130-434"/>
</dbReference>
<dbReference type="PDB" id="8SVN">
    <property type="method" value="X-ray"/>
    <property type="resolution" value="2.20 A"/>
    <property type="chains" value="A/B=130-434"/>
</dbReference>
<dbReference type="PDB" id="8SVO">
    <property type="method" value="X-ray"/>
    <property type="resolution" value="2.35 A"/>
    <property type="chains" value="A/B=130-434"/>
</dbReference>
<dbReference type="PDB" id="8SVP">
    <property type="method" value="X-ray"/>
    <property type="resolution" value="3.32 A"/>
    <property type="chains" value="A/B=130-434"/>
</dbReference>
<dbReference type="PDB" id="8SVQ">
    <property type="method" value="X-ray"/>
    <property type="resolution" value="2.75 A"/>
    <property type="chains" value="A/B=130-434"/>
</dbReference>
<dbReference type="PDB" id="8SVR">
    <property type="method" value="X-ray"/>
    <property type="resolution" value="2.92 A"/>
    <property type="chains" value="A/B=130-434"/>
</dbReference>
<dbReference type="PDB" id="8SVS">
    <property type="method" value="X-ray"/>
    <property type="resolution" value="2.68 A"/>
    <property type="chains" value="A/B=130-434"/>
</dbReference>
<dbReference type="PDB" id="8SVT">
    <property type="method" value="X-ray"/>
    <property type="resolution" value="2.39 A"/>
    <property type="chains" value="A/B=130-434"/>
</dbReference>
<dbReference type="PDB" id="8SVU">
    <property type="method" value="X-ray"/>
    <property type="resolution" value="2.89 A"/>
    <property type="chains" value="A/B=130-434"/>
</dbReference>
<dbReference type="PDB" id="8SVX">
    <property type="method" value="X-ray"/>
    <property type="resolution" value="2.14 A"/>
    <property type="chains" value="A/B=130-434"/>
</dbReference>
<dbReference type="PDB" id="8SZV">
    <property type="method" value="X-ray"/>
    <property type="resolution" value="2.20 A"/>
    <property type="chains" value="A=130-434"/>
</dbReference>
<dbReference type="PDB" id="9BEQ">
    <property type="method" value="X-ray"/>
    <property type="resolution" value="2.60 A"/>
    <property type="chains" value="A=130-434"/>
</dbReference>
<dbReference type="PDB" id="9FZG">
    <property type="method" value="X-ray"/>
    <property type="resolution" value="2.00 A"/>
    <property type="chains" value="A=130-434"/>
</dbReference>
<dbReference type="PDB" id="9FZH">
    <property type="method" value="X-ray"/>
    <property type="resolution" value="2.50 A"/>
    <property type="chains" value="A=130-434"/>
</dbReference>
<dbReference type="PDB" id="9FZI">
    <property type="method" value="X-ray"/>
    <property type="resolution" value="2.70 A"/>
    <property type="chains" value="A/B=130-434"/>
</dbReference>
<dbReference type="PDB" id="9FZJ">
    <property type="method" value="X-ray"/>
    <property type="resolution" value="1.60 A"/>
    <property type="chains" value="A=130-434"/>
</dbReference>
<dbReference type="PDBsum" id="1ILG"/>
<dbReference type="PDBsum" id="1ILH"/>
<dbReference type="PDBsum" id="1M13"/>
<dbReference type="PDBsum" id="1NRL"/>
<dbReference type="PDBsum" id="1SKX"/>
<dbReference type="PDBsum" id="2O9I"/>
<dbReference type="PDBsum" id="2QNV"/>
<dbReference type="PDBsum" id="3CTB"/>
<dbReference type="PDBsum" id="3HVL"/>
<dbReference type="PDBsum" id="3R8D"/>
<dbReference type="PDBsum" id="4J5W"/>
<dbReference type="PDBsum" id="4J5X"/>
<dbReference type="PDBsum" id="4NY9"/>
<dbReference type="PDBsum" id="4S0S"/>
<dbReference type="PDBsum" id="4S0T"/>
<dbReference type="PDBsum" id="4X1F"/>
<dbReference type="PDBsum" id="4X1G"/>
<dbReference type="PDBsum" id="4XAO"/>
<dbReference type="PDBsum" id="4XHD"/>
<dbReference type="PDBsum" id="5A86"/>
<dbReference type="PDBsum" id="5X0R"/>
<dbReference type="PDBsum" id="6BNS"/>
<dbReference type="PDBsum" id="6DUP"/>
<dbReference type="PDBsum" id="6HJ2"/>
<dbReference type="PDBsum" id="6HTY"/>
<dbReference type="PDBsum" id="6NX1"/>
<dbReference type="PDBsum" id="6P2B"/>
<dbReference type="PDBsum" id="6S41"/>
<dbReference type="PDBsum" id="6TFI"/>
<dbReference type="PDBsum" id="6XP9"/>
<dbReference type="PDBsum" id="7AX8"/>
<dbReference type="PDBsum" id="7AX9"/>
<dbReference type="PDBsum" id="7AXA"/>
<dbReference type="PDBsum" id="7AXB"/>
<dbReference type="PDBsum" id="7AXC"/>
<dbReference type="PDBsum" id="7AXD"/>
<dbReference type="PDBsum" id="7AXE"/>
<dbReference type="PDBsum" id="7AXF"/>
<dbReference type="PDBsum" id="7AXG"/>
<dbReference type="PDBsum" id="7AXH"/>
<dbReference type="PDBsum" id="7AXI"/>
<dbReference type="PDBsum" id="7AXJ"/>
<dbReference type="PDBsum" id="7AXK"/>
<dbReference type="PDBsum" id="7AXL"/>
<dbReference type="PDBsum" id="7N2A"/>
<dbReference type="PDBsum" id="7RIO"/>
<dbReference type="PDBsum" id="7RIU"/>
<dbReference type="PDBsum" id="7RIV"/>
<dbReference type="PDBsum" id="7YFK"/>
<dbReference type="PDBsum" id="8CCT"/>
<dbReference type="PDBsum" id="8CF9"/>
<dbReference type="PDBsum" id="8CH8"/>
<dbReference type="PDBsum" id="8E3N"/>
<dbReference type="PDBsum" id="8EQZ"/>
<dbReference type="PDBsum" id="8F5Y"/>
<dbReference type="PDBsum" id="8FPE"/>
<dbReference type="PDBsum" id="8SVN"/>
<dbReference type="PDBsum" id="8SVO"/>
<dbReference type="PDBsum" id="8SVP"/>
<dbReference type="PDBsum" id="8SVQ"/>
<dbReference type="PDBsum" id="8SVR"/>
<dbReference type="PDBsum" id="8SVS"/>
<dbReference type="PDBsum" id="8SVT"/>
<dbReference type="PDBsum" id="8SVU"/>
<dbReference type="PDBsum" id="8SVX"/>
<dbReference type="PDBsum" id="8SZV"/>
<dbReference type="PDBsum" id="9BEQ"/>
<dbReference type="PDBsum" id="9FZG"/>
<dbReference type="PDBsum" id="9FZH"/>
<dbReference type="PDBsum" id="9FZI"/>
<dbReference type="PDBsum" id="9FZJ"/>
<dbReference type="SASBDB" id="O75469"/>
<dbReference type="SMR" id="O75469"/>
<dbReference type="BioGRID" id="114380">
    <property type="interactions" value="48"/>
</dbReference>
<dbReference type="ComplexPortal" id="CPX-496">
    <property type="entry name" value="RXRalpha-PXR nuclear receptor complex"/>
</dbReference>
<dbReference type="ComplexPortal" id="CPX-517">
    <property type="entry name" value="PXR-NCOA1 activated nuclear receptor complex"/>
</dbReference>
<dbReference type="CORUM" id="O75469"/>
<dbReference type="FunCoup" id="O75469">
    <property type="interactions" value="331"/>
</dbReference>
<dbReference type="IntAct" id="O75469">
    <property type="interactions" value="11"/>
</dbReference>
<dbReference type="STRING" id="9606.ENSP00000336528"/>
<dbReference type="BindingDB" id="O75469"/>
<dbReference type="ChEMBL" id="CHEMBL3401"/>
<dbReference type="DrugBank" id="DB04468">
    <property type="generic name" value="Afimoxifene"/>
</dbReference>
<dbReference type="DrugBank" id="DB14001">
    <property type="generic name" value="alpha-Tocopherol succinate"/>
</dbReference>
<dbReference type="DrugBank" id="DB01393">
    <property type="generic name" value="Bezafibrate"/>
</dbReference>
<dbReference type="DrugBank" id="DB00564">
    <property type="generic name" value="Carbamazepine"/>
</dbReference>
<dbReference type="DrugBank" id="DB06777">
    <property type="generic name" value="Chenodeoxycholic acid"/>
</dbReference>
<dbReference type="DrugBank" id="DB01068">
    <property type="generic name" value="Clonazepam"/>
</dbReference>
<dbReference type="DrugBank" id="DB00257">
    <property type="generic name" value="Clotrimazole"/>
</dbReference>
<dbReference type="DrugBank" id="DB00531">
    <property type="generic name" value="Cyclophosphamide"/>
</dbReference>
<dbReference type="DrugBank" id="DB14002">
    <property type="generic name" value="D-alpha-Tocopherol acetate"/>
</dbReference>
<dbReference type="DrugBank" id="DB01234">
    <property type="generic name" value="Dexamethasone"/>
</dbReference>
<dbReference type="DrugBank" id="DB14649">
    <property type="generic name" value="Dexamethasone acetate"/>
</dbReference>
<dbReference type="DrugBank" id="DB00255">
    <property type="generic name" value="Diethylstilbestrol"/>
</dbReference>
<dbReference type="DrugBank" id="DB01248">
    <property type="generic name" value="Docetaxel"/>
</dbReference>
<dbReference type="DrugBank" id="DB05928">
    <property type="generic name" value="Dovitinib"/>
</dbReference>
<dbReference type="DrugBank" id="DB01127">
    <property type="generic name" value="Econazole"/>
</dbReference>
<dbReference type="DrugBank" id="DB00530">
    <property type="generic name" value="Erlotinib"/>
</dbReference>
<dbReference type="DrugBank" id="DB00783">
    <property type="generic name" value="Estradiol"/>
</dbReference>
<dbReference type="DrugBank" id="DB13952">
    <property type="generic name" value="Estradiol acetate"/>
</dbReference>
<dbReference type="DrugBank" id="DB13953">
    <property type="generic name" value="Estradiol benzoate"/>
</dbReference>
<dbReference type="DrugBank" id="DB13954">
    <property type="generic name" value="Estradiol cypionate"/>
</dbReference>
<dbReference type="DrugBank" id="DB13955">
    <property type="generic name" value="Estradiol dienanthate"/>
</dbReference>
<dbReference type="DrugBank" id="DB13956">
    <property type="generic name" value="Estradiol valerate"/>
</dbReference>
<dbReference type="DrugBank" id="DB00977">
    <property type="generic name" value="Ethinylestradiol"/>
</dbReference>
<dbReference type="DrugBank" id="DB00754">
    <property type="generic name" value="Ethotoin"/>
</dbReference>
<dbReference type="DrugBank" id="DB01039">
    <property type="generic name" value="Fenofibrate"/>
</dbReference>
<dbReference type="DrugBank" id="DB13873">
    <property type="generic name" value="Fenofibric acid"/>
</dbReference>
<dbReference type="DrugBank" id="DB00499">
    <property type="generic name" value="Flutamide"/>
</dbReference>
<dbReference type="DrugBank" id="DB01645">
    <property type="generic name" value="Genistein"/>
</dbReference>
<dbReference type="DrugBank" id="DB07931">
    <property type="generic name" value="Hexestrol"/>
</dbReference>
<dbReference type="DrugBank" id="DB01892">
    <property type="generic name" value="Hyperforin"/>
</dbReference>
<dbReference type="DrugBank" id="DB01181">
    <property type="generic name" value="Ifosfamide"/>
</dbReference>
<dbReference type="DrugBank" id="DB01026">
    <property type="generic name" value="Ketoconazole"/>
</dbReference>
<dbReference type="DrugBank" id="DB00431">
    <property type="generic name" value="Lindane"/>
</dbReference>
<dbReference type="DrugBank" id="DB00532">
    <property type="generic name" value="Mephenytoin"/>
</dbReference>
<dbReference type="DrugBank" id="DB00849">
    <property type="generic name" value="Methylphenobarbital"/>
</dbReference>
<dbReference type="DrugBank" id="DB01110">
    <property type="generic name" value="Miconazole"/>
</dbReference>
<dbReference type="DrugBank" id="DB00834">
    <property type="generic name" value="Mifepristone"/>
</dbReference>
<dbReference type="DrugBank" id="DB11605">
    <property type="generic name" value="Myrrh"/>
</dbReference>
<dbReference type="DrugBank" id="DB01115">
    <property type="generic name" value="Nifedipine"/>
</dbReference>
<dbReference type="DrugBank" id="DB00239">
    <property type="generic name" value="Oxiconazole"/>
</dbReference>
<dbReference type="DrugBank" id="DB01229">
    <property type="generic name" value="Paclitaxel"/>
</dbReference>
<dbReference type="DrugBank" id="DB00312">
    <property type="generic name" value="Pentobarbital"/>
</dbReference>
<dbReference type="DrugBank" id="DB04930">
    <property type="generic name" value="Permethrin"/>
</dbReference>
<dbReference type="DrugBank" id="DB01174">
    <property type="generic name" value="Phenobarbital"/>
</dbReference>
<dbReference type="DrugBank" id="DB04824">
    <property type="generic name" value="Phenolphthalein"/>
</dbReference>
<dbReference type="DrugBank" id="DB00252">
    <property type="generic name" value="Phenytoin"/>
</dbReference>
<dbReference type="DrugBank" id="DB12582">
    <property type="generic name" value="Piperine"/>
</dbReference>
<dbReference type="DrugBank" id="DB01708">
    <property type="generic name" value="Prasterone"/>
</dbReference>
<dbReference type="DrugBank" id="DB02789">
    <property type="generic name" value="Pregnenolone"/>
</dbReference>
<dbReference type="DrugBank" id="DB11087">
    <property type="generic name" value="Pyrethrum extract"/>
</dbReference>
<dbReference type="DrugBank" id="DB04216">
    <property type="generic name" value="Quercetin"/>
</dbReference>
<dbReference type="DrugBank" id="DB02709">
    <property type="generic name" value="Resveratrol"/>
</dbReference>
<dbReference type="DrugBank" id="DB01045">
    <property type="generic name" value="Rifampin"/>
</dbReference>
<dbReference type="DrugBank" id="DB01220">
    <property type="generic name" value="Rifaximin"/>
</dbReference>
<dbReference type="DrugBank" id="DB08864">
    <property type="generic name" value="Rilpivirine"/>
</dbReference>
<dbReference type="DrugBank" id="DB00503">
    <property type="generic name" value="Ritonavir"/>
</dbReference>
<dbReference type="DrugBank" id="DB00421">
    <property type="generic name" value="Spironolactone"/>
</dbReference>
<dbReference type="DrugBank" id="DB04466">
    <property type="generic name" value="SR12813"/>
</dbReference>
<dbReference type="DrugBank" id="DB01138">
    <property type="generic name" value="Sulfinpyrazone"/>
</dbReference>
<dbReference type="DrugBank" id="DB00675">
    <property type="generic name" value="Tamoxifen"/>
</dbReference>
<dbReference type="DrugBank" id="DB07080">
    <property type="generic name" value="TO-901317"/>
</dbReference>
<dbReference type="DrugBank" id="DB08604">
    <property type="generic name" value="Triclosan"/>
</dbReference>
<dbReference type="DrugBank" id="DB13179">
    <property type="generic name" value="Troleandomycin"/>
</dbReference>
<dbReference type="DrugBank" id="DB00163">
    <property type="generic name" value="Vitamin E"/>
</dbReference>
<dbReference type="DrugBank" id="DB00682">
    <property type="generic name" value="Warfarin"/>
</dbReference>
<dbReference type="DrugCentral" id="O75469"/>
<dbReference type="GuidetoPHARMACOLOGY" id="606"/>
<dbReference type="SwissLipids" id="SLP:000001583"/>
<dbReference type="TCDB" id="9.B.208.1.3">
    <property type="family name" value="the vitamin d3 receptor (vdr) family"/>
</dbReference>
<dbReference type="GlyGen" id="O75469">
    <property type="glycosylation" value="1 site"/>
</dbReference>
<dbReference type="iPTMnet" id="O75469"/>
<dbReference type="PhosphoSitePlus" id="O75469"/>
<dbReference type="BioMuta" id="NR1I2"/>
<dbReference type="MassIVE" id="O75469"/>
<dbReference type="PaxDb" id="9606-ENSP00000336528"/>
<dbReference type="PeptideAtlas" id="O75469"/>
<dbReference type="ABCD" id="O75469">
    <property type="antibodies" value="8 sequenced antibodies"/>
</dbReference>
<dbReference type="Antibodypedia" id="16619">
    <property type="antibodies" value="422 antibodies from 41 providers"/>
</dbReference>
<dbReference type="DNASU" id="8856"/>
<dbReference type="Ensembl" id="ENST00000337940.4">
    <molecule id="O75469-7"/>
    <property type="protein sequence ID" value="ENSP00000336528.4"/>
    <property type="gene ID" value="ENSG00000144852.20"/>
</dbReference>
<dbReference type="Ensembl" id="ENST00000393716.8">
    <molecule id="O75469-1"/>
    <property type="protein sequence ID" value="ENSP00000377319.3"/>
    <property type="gene ID" value="ENSG00000144852.20"/>
</dbReference>
<dbReference type="Ensembl" id="ENST00000466380.6">
    <molecule id="O75469-4"/>
    <property type="protein sequence ID" value="ENSP00000420297.2"/>
    <property type="gene ID" value="ENSG00000144852.20"/>
</dbReference>
<dbReference type="GeneID" id="8856"/>
<dbReference type="KEGG" id="hsa:8856"/>
<dbReference type="MANE-Select" id="ENST00000393716.8">
    <property type="protein sequence ID" value="ENSP00000377319.3"/>
    <property type="RefSeq nucleotide sequence ID" value="NM_003889.4"/>
    <property type="RefSeq protein sequence ID" value="NP_003880.3"/>
</dbReference>
<dbReference type="UCSC" id="uc003edk.3">
    <molecule id="O75469-1"/>
    <property type="organism name" value="human"/>
</dbReference>
<dbReference type="AGR" id="HGNC:7968"/>
<dbReference type="CTD" id="8856"/>
<dbReference type="DisGeNET" id="8856"/>
<dbReference type="GeneCards" id="NR1I2"/>
<dbReference type="HGNC" id="HGNC:7968">
    <property type="gene designation" value="NR1I2"/>
</dbReference>
<dbReference type="HPA" id="ENSG00000144852">
    <property type="expression patterns" value="Group enriched (intestine, liver)"/>
</dbReference>
<dbReference type="MIM" id="603065">
    <property type="type" value="gene"/>
</dbReference>
<dbReference type="neXtProt" id="NX_O75469"/>
<dbReference type="OpenTargets" id="ENSG00000144852"/>
<dbReference type="PharmGKB" id="PA378"/>
<dbReference type="VEuPathDB" id="HostDB:ENSG00000144852"/>
<dbReference type="eggNOG" id="KOG3575">
    <property type="taxonomic scope" value="Eukaryota"/>
</dbReference>
<dbReference type="GeneTree" id="ENSGT00940000161118"/>
<dbReference type="InParanoid" id="O75469"/>
<dbReference type="OMA" id="GTCEITQ"/>
<dbReference type="OrthoDB" id="6355676at2759"/>
<dbReference type="PAN-GO" id="O75469">
    <property type="GO annotations" value="5 GO annotations based on evolutionary models"/>
</dbReference>
<dbReference type="PhylomeDB" id="O75469"/>
<dbReference type="TreeFam" id="TF316304"/>
<dbReference type="PathwayCommons" id="O75469"/>
<dbReference type="Reactome" id="R-HSA-383280">
    <property type="pathway name" value="Nuclear Receptor transcription pathway"/>
</dbReference>
<dbReference type="Reactome" id="R-HSA-4090294">
    <molecule id="O75469-1"/>
    <property type="pathway name" value="SUMOylation of intracellular receptors"/>
</dbReference>
<dbReference type="SignaLink" id="O75469"/>
<dbReference type="SIGNOR" id="O75469"/>
<dbReference type="BioGRID-ORCS" id="8856">
    <property type="hits" value="10 hits in 1183 CRISPR screens"/>
</dbReference>
<dbReference type="EvolutionaryTrace" id="O75469"/>
<dbReference type="GeneWiki" id="Pregnane_X_receptor"/>
<dbReference type="GenomeRNAi" id="8856"/>
<dbReference type="Pharos" id="O75469">
    <property type="development level" value="Tchem"/>
</dbReference>
<dbReference type="PRO" id="PR:O75469"/>
<dbReference type="Proteomes" id="UP000005640">
    <property type="component" value="Chromosome 3"/>
</dbReference>
<dbReference type="RNAct" id="O75469">
    <property type="molecule type" value="protein"/>
</dbReference>
<dbReference type="Bgee" id="ENSG00000144852">
    <property type="expression patterns" value="Expressed in right lobe of liver and 84 other cell types or tissues"/>
</dbReference>
<dbReference type="ExpressionAtlas" id="O75469">
    <property type="expression patterns" value="baseline and differential"/>
</dbReference>
<dbReference type="GO" id="GO:0000785">
    <property type="term" value="C:chromatin"/>
    <property type="evidence" value="ECO:0000247"/>
    <property type="project" value="NTNU_SB"/>
</dbReference>
<dbReference type="GO" id="GO:0045111">
    <property type="term" value="C:intermediate filament cytoskeleton"/>
    <property type="evidence" value="ECO:0000314"/>
    <property type="project" value="HPA"/>
</dbReference>
<dbReference type="GO" id="GO:0016604">
    <property type="term" value="C:nuclear body"/>
    <property type="evidence" value="ECO:0000314"/>
    <property type="project" value="HPA"/>
</dbReference>
<dbReference type="GO" id="GO:0005654">
    <property type="term" value="C:nucleoplasm"/>
    <property type="evidence" value="ECO:0000314"/>
    <property type="project" value="HPA"/>
</dbReference>
<dbReference type="GO" id="GO:0005634">
    <property type="term" value="C:nucleus"/>
    <property type="evidence" value="ECO:0000250"/>
    <property type="project" value="UniProt"/>
</dbReference>
<dbReference type="GO" id="GO:0005667">
    <property type="term" value="C:transcription regulator complex"/>
    <property type="evidence" value="ECO:0000353"/>
    <property type="project" value="ComplexPortal"/>
</dbReference>
<dbReference type="GO" id="GO:0001228">
    <property type="term" value="F:DNA-binding transcription activator activity, RNA polymerase II-specific"/>
    <property type="evidence" value="ECO:0000314"/>
    <property type="project" value="NTNU_SB"/>
</dbReference>
<dbReference type="GO" id="GO:0000981">
    <property type="term" value="F:DNA-binding transcription factor activity, RNA polymerase II-specific"/>
    <property type="evidence" value="ECO:0000247"/>
    <property type="project" value="NTNU_SB"/>
</dbReference>
<dbReference type="GO" id="GO:0004879">
    <property type="term" value="F:nuclear receptor activity"/>
    <property type="evidence" value="ECO:0000314"/>
    <property type="project" value="UniProtKB"/>
</dbReference>
<dbReference type="GO" id="GO:0016922">
    <property type="term" value="F:nuclear receptor binding"/>
    <property type="evidence" value="ECO:0000314"/>
    <property type="project" value="GO_Central"/>
</dbReference>
<dbReference type="GO" id="GO:0000978">
    <property type="term" value="F:RNA polymerase II cis-regulatory region sequence-specific DNA binding"/>
    <property type="evidence" value="ECO:0000318"/>
    <property type="project" value="GO_Central"/>
</dbReference>
<dbReference type="GO" id="GO:0000977">
    <property type="term" value="F:RNA polymerase II transcription regulatory region sequence-specific DNA binding"/>
    <property type="evidence" value="ECO:0000314"/>
    <property type="project" value="NTNU_SB"/>
</dbReference>
<dbReference type="GO" id="GO:1990837">
    <property type="term" value="F:sequence-specific double-stranded DNA binding"/>
    <property type="evidence" value="ECO:0000314"/>
    <property type="project" value="ARUK-UCL"/>
</dbReference>
<dbReference type="GO" id="GO:0008270">
    <property type="term" value="F:zinc ion binding"/>
    <property type="evidence" value="ECO:0007669"/>
    <property type="project" value="UniProtKB-KW"/>
</dbReference>
<dbReference type="GO" id="GO:0030154">
    <property type="term" value="P:cell differentiation"/>
    <property type="evidence" value="ECO:0000318"/>
    <property type="project" value="GO_Central"/>
</dbReference>
<dbReference type="GO" id="GO:0071219">
    <property type="term" value="P:cellular response to molecule of bacterial origin"/>
    <property type="evidence" value="ECO:0000250"/>
    <property type="project" value="UniProt"/>
</dbReference>
<dbReference type="GO" id="GO:0060729">
    <property type="term" value="P:intestinal epithelial structure maintenance"/>
    <property type="evidence" value="ECO:0000250"/>
    <property type="project" value="UniProt"/>
</dbReference>
<dbReference type="GO" id="GO:0030522">
    <property type="term" value="P:intracellular receptor signaling pathway"/>
    <property type="evidence" value="ECO:0000318"/>
    <property type="project" value="GO_Central"/>
</dbReference>
<dbReference type="GO" id="GO:0045892">
    <property type="term" value="P:negative regulation of DNA-templated transcription"/>
    <property type="evidence" value="ECO:0000314"/>
    <property type="project" value="MGI"/>
</dbReference>
<dbReference type="GO" id="GO:0000122">
    <property type="term" value="P:negative regulation of transcription by RNA polymerase II"/>
    <property type="evidence" value="ECO:0000318"/>
    <property type="project" value="GO_Central"/>
</dbReference>
<dbReference type="GO" id="GO:0045893">
    <property type="term" value="P:positive regulation of DNA-templated transcription"/>
    <property type="evidence" value="ECO:0000314"/>
    <property type="project" value="UniProtKB"/>
</dbReference>
<dbReference type="GO" id="GO:0010628">
    <property type="term" value="P:positive regulation of gene expression"/>
    <property type="evidence" value="ECO:0007669"/>
    <property type="project" value="Ensembl"/>
</dbReference>
<dbReference type="GO" id="GO:0045944">
    <property type="term" value="P:positive regulation of transcription by RNA polymerase II"/>
    <property type="evidence" value="ECO:0000314"/>
    <property type="project" value="NTNU_SB"/>
</dbReference>
<dbReference type="GO" id="GO:0006355">
    <property type="term" value="P:regulation of DNA-templated transcription"/>
    <property type="evidence" value="ECO:0000314"/>
    <property type="project" value="GO_Central"/>
</dbReference>
<dbReference type="GO" id="GO:0007165">
    <property type="term" value="P:signal transduction"/>
    <property type="evidence" value="ECO:0000304"/>
    <property type="project" value="ProtInc"/>
</dbReference>
<dbReference type="GO" id="GO:0008202">
    <property type="term" value="P:steroid metabolic process"/>
    <property type="evidence" value="ECO:0000304"/>
    <property type="project" value="ProtInc"/>
</dbReference>
<dbReference type="GO" id="GO:0042178">
    <property type="term" value="P:xenobiotic catabolic process"/>
    <property type="evidence" value="ECO:0000314"/>
    <property type="project" value="UniProtKB"/>
</dbReference>
<dbReference type="GO" id="GO:0006805">
    <property type="term" value="P:xenobiotic metabolic process"/>
    <property type="evidence" value="ECO:0000314"/>
    <property type="project" value="UniProtKB"/>
</dbReference>
<dbReference type="GO" id="GO:0042908">
    <property type="term" value="P:xenobiotic transport"/>
    <property type="evidence" value="ECO:0000314"/>
    <property type="project" value="UniProtKB"/>
</dbReference>
<dbReference type="CDD" id="cd06934">
    <property type="entry name" value="NR_LBD_PXR_like"/>
    <property type="match status" value="1"/>
</dbReference>
<dbReference type="DisProt" id="DP00323"/>
<dbReference type="FunFam" id="1.10.565.10:FF:000024">
    <property type="entry name" value="Nuclear receptor subfamily 1 group I member 2"/>
    <property type="match status" value="1"/>
</dbReference>
<dbReference type="FunFam" id="3.30.50.10:FF:000033">
    <property type="entry name" value="Nuclear receptor subfamily 1 group I member 2"/>
    <property type="match status" value="1"/>
</dbReference>
<dbReference type="Gene3D" id="3.30.50.10">
    <property type="entry name" value="Erythroid Transcription Factor GATA-1, subunit A"/>
    <property type="match status" value="1"/>
</dbReference>
<dbReference type="Gene3D" id="1.10.565.10">
    <property type="entry name" value="Retinoid X Receptor"/>
    <property type="match status" value="1"/>
</dbReference>
<dbReference type="IDEAL" id="IID00361"/>
<dbReference type="InterPro" id="IPR035500">
    <property type="entry name" value="NHR-like_dom_sf"/>
</dbReference>
<dbReference type="InterPro" id="IPR000536">
    <property type="entry name" value="Nucl_hrmn_rcpt_lig-bd"/>
</dbReference>
<dbReference type="InterPro" id="IPR050234">
    <property type="entry name" value="Nuclear_hormone_rcpt_NR1"/>
</dbReference>
<dbReference type="InterPro" id="IPR001723">
    <property type="entry name" value="Nuclear_hrmn_rcpt"/>
</dbReference>
<dbReference type="InterPro" id="IPR001628">
    <property type="entry name" value="Znf_hrmn_rcpt"/>
</dbReference>
<dbReference type="InterPro" id="IPR013088">
    <property type="entry name" value="Znf_NHR/GATA"/>
</dbReference>
<dbReference type="PANTHER" id="PTHR24082">
    <property type="entry name" value="NUCLEAR HORMONE RECEPTOR"/>
    <property type="match status" value="1"/>
</dbReference>
<dbReference type="PANTHER" id="PTHR24082:SF39">
    <property type="entry name" value="NUCLEAR RECEPTOR SUBFAMILY 1 GROUP I MEMBER 2"/>
    <property type="match status" value="1"/>
</dbReference>
<dbReference type="Pfam" id="PF00104">
    <property type="entry name" value="Hormone_recep"/>
    <property type="match status" value="1"/>
</dbReference>
<dbReference type="Pfam" id="PF00105">
    <property type="entry name" value="zf-C4"/>
    <property type="match status" value="1"/>
</dbReference>
<dbReference type="PRINTS" id="PR00398">
    <property type="entry name" value="STRDHORMONER"/>
</dbReference>
<dbReference type="PRINTS" id="PR00047">
    <property type="entry name" value="STROIDFINGER"/>
</dbReference>
<dbReference type="SMART" id="SM00430">
    <property type="entry name" value="HOLI"/>
    <property type="match status" value="1"/>
</dbReference>
<dbReference type="SMART" id="SM00399">
    <property type="entry name" value="ZnF_C4"/>
    <property type="match status" value="1"/>
</dbReference>
<dbReference type="SUPFAM" id="SSF57716">
    <property type="entry name" value="Glucocorticoid receptor-like (DNA-binding domain)"/>
    <property type="match status" value="1"/>
</dbReference>
<dbReference type="SUPFAM" id="SSF48508">
    <property type="entry name" value="Nuclear receptor ligand-binding domain"/>
    <property type="match status" value="1"/>
</dbReference>
<dbReference type="PROSITE" id="PS51843">
    <property type="entry name" value="NR_LBD"/>
    <property type="match status" value="1"/>
</dbReference>
<dbReference type="PROSITE" id="PS00031">
    <property type="entry name" value="NUCLEAR_REC_DBD_1"/>
    <property type="match status" value="1"/>
</dbReference>
<dbReference type="PROSITE" id="PS51030">
    <property type="entry name" value="NUCLEAR_REC_DBD_2"/>
    <property type="match status" value="1"/>
</dbReference>
<protein>
    <recommendedName>
        <fullName>Nuclear receptor subfamily 1 group I member 2</fullName>
    </recommendedName>
    <alternativeName>
        <fullName>Orphan nuclear receptor PAR1</fullName>
    </alternativeName>
    <alternativeName>
        <fullName>Orphan nuclear receptor PXR</fullName>
    </alternativeName>
    <alternativeName>
        <fullName>Pregnane X receptor</fullName>
    </alternativeName>
    <alternativeName>
        <fullName>Steroid and xenobiotic receptor</fullName>
        <shortName>SXR</shortName>
    </alternativeName>
</protein>
<feature type="chain" id="PRO_0000053547" description="Nuclear receptor subfamily 1 group I member 2">
    <location>
        <begin position="1"/>
        <end position="434"/>
    </location>
</feature>
<feature type="domain" description="NR LBD" evidence="3">
    <location>
        <begin position="146"/>
        <end position="433"/>
    </location>
</feature>
<feature type="DNA-binding region" description="Nuclear receptor" evidence="2">
    <location>
        <begin position="38"/>
        <end position="107"/>
    </location>
</feature>
<feature type="zinc finger region" description="NR C4-type" evidence="2">
    <location>
        <begin position="41"/>
        <end position="61"/>
    </location>
</feature>
<feature type="zinc finger region" description="NR C4-type" evidence="2">
    <location>
        <begin position="77"/>
        <end position="102"/>
    </location>
</feature>
<feature type="region of interest" description="Hinge">
    <location>
        <begin position="108"/>
        <end position="145"/>
    </location>
</feature>
<feature type="short sequence motif" description="Bipartite nuclear localization signal">
    <location>
        <begin position="66"/>
        <end position="92"/>
    </location>
</feature>
<feature type="binding site" evidence="6 22">
    <location>
        <position position="247"/>
    </location>
    <ligand>
        <name>hyperforin</name>
        <dbReference type="ChEBI" id="CHEBI:5834"/>
        <note>agonist</note>
    </ligand>
</feature>
<feature type="binding site" evidence="6 22">
    <location>
        <begin position="285"/>
        <end position="288"/>
    </location>
    <ligand>
        <name>hyperforin</name>
        <dbReference type="ChEBI" id="CHEBI:5834"/>
        <note>agonist</note>
    </ligand>
</feature>
<feature type="binding site" evidence="6 22">
    <location>
        <position position="407"/>
    </location>
    <ligand>
        <name>hyperforin</name>
        <dbReference type="ChEBI" id="CHEBI:5834"/>
        <note>agonist</note>
    </ligand>
</feature>
<feature type="splice variant" id="VSP_003668" description="In isoform 1B and isoform 2B." evidence="18">
    <location>
        <begin position="1"/>
        <end position="55"/>
    </location>
</feature>
<feature type="splice variant" id="VSP_003667" description="In isoform 1C and isoform 2C." evidence="18">
    <original>M</original>
    <variation>MDPRGEVGAKNLPPNSPRGPEANL</variation>
    <location>
        <position position="1"/>
    </location>
</feature>
<feature type="splice variant" id="VSP_026669" description="In isoform 3." evidence="17">
    <original>M</original>
    <variation>MTVTRTHHFKEGSLRAPAIPLHSAAAELASNHPRGPEANL</variation>
    <location>
        <position position="1"/>
    </location>
</feature>
<feature type="splice variant" id="VSP_003669" description="In isoform 2A, isoform 2B and isoform 2C." evidence="18">
    <location>
        <begin position="174"/>
        <end position="210"/>
    </location>
</feature>
<feature type="sequence variant" id="VAR_050581" description="In dbSNP:rs1063955." evidence="15">
    <original>A</original>
    <variation>T</variation>
    <location>
        <position position="12"/>
    </location>
</feature>
<feature type="sequence variant" id="VAR_033237" description="In dbSNP:rs59371185." evidence="16">
    <original>E</original>
    <variation>K</variation>
    <location>
        <position position="18"/>
    </location>
</feature>
<feature type="sequence variant" id="VAR_012228" description="In allele PXR*2; dbSNP:rs12721613." evidence="5 16">
    <original>P</original>
    <variation>S</variation>
    <location>
        <position position="27"/>
    </location>
</feature>
<feature type="sequence variant" id="VAR_012229" description="In allele PXR*3; dbSNP:rs12721607." evidence="5">
    <original>G</original>
    <variation>R</variation>
    <location>
        <position position="36"/>
    </location>
</feature>
<feature type="sequence variant" id="VAR_018340" description="In dbSNP:rs72551371." evidence="9">
    <original>R</original>
    <variation>C</variation>
    <location>
        <position position="98"/>
    </location>
</feature>
<feature type="sequence variant" id="VAR_012230" description="In allele PXR*4; dbSNP:rs12721608." evidence="5">
    <original>R</original>
    <variation>Q</variation>
    <location>
        <position position="122"/>
    </location>
</feature>
<feature type="sequence variant" id="VAR_018341" description="In dbSNP:rs72551373." evidence="9">
    <original>R</original>
    <variation>Q</variation>
    <location>
        <position position="148"/>
    </location>
</feature>
<feature type="sequence variant" id="VAR_033238" description="In dbSNP:rs35761343." evidence="16">
    <original>A</original>
    <variation>T</variation>
    <location>
        <position position="370"/>
    </location>
</feature>
<feature type="sequence variant" id="VAR_018342" description="In dbSNP:rs72551375." evidence="9">
    <original>R</original>
    <variation>W</variation>
    <location>
        <position position="381"/>
    </location>
</feature>
<feature type="sequence variant" id="VAR_018343" description="In dbSNP:rs72551376." evidence="9">
    <original>I</original>
    <variation>V</variation>
    <location>
        <position position="403"/>
    </location>
</feature>
<feature type="mutagenesis site" description="Abolishes nuclear localization; when associated with 91-A-A-92." evidence="7">
    <original>RR</original>
    <variation>AA</variation>
    <location>
        <begin position="66"/>
        <end position="67"/>
    </location>
</feature>
<feature type="mutagenesis site" description="Abolishes nuclear localization; when associated with 66-A-A-67." evidence="7">
    <original>RR</original>
    <variation>AA</variation>
    <location>
        <begin position="91"/>
        <end position="92"/>
    </location>
</feature>
<feature type="sequence conflict" description="In Ref. 5; CAB55489/CAB55490/CAB55491/CAB55492/CAB55493/CAB55494." evidence="19" ref="5">
    <original>K</original>
    <variation>N</variation>
    <location>
        <position position="109"/>
    </location>
</feature>
<feature type="sequence conflict" description="In Ref. 8; AAH17304." evidence="19" ref="8">
    <location>
        <position position="174"/>
    </location>
</feature>
<feature type="helix" evidence="30">
    <location>
        <begin position="139"/>
        <end position="141"/>
    </location>
</feature>
<feature type="helix" evidence="30">
    <location>
        <begin position="145"/>
        <end position="161"/>
    </location>
</feature>
<feature type="helix" evidence="30">
    <location>
        <begin position="193"/>
        <end position="207"/>
    </location>
</feature>
<feature type="strand" evidence="30">
    <location>
        <begin position="211"/>
        <end position="216"/>
    </location>
</feature>
<feature type="strand" evidence="29">
    <location>
        <begin position="218"/>
        <end position="220"/>
    </location>
</feature>
<feature type="strand" evidence="30">
    <location>
        <begin position="222"/>
        <end position="226"/>
    </location>
</feature>
<feature type="strand" evidence="27">
    <location>
        <begin position="231"/>
        <end position="233"/>
    </location>
</feature>
<feature type="helix" evidence="30">
    <location>
        <begin position="234"/>
        <end position="237"/>
    </location>
</feature>
<feature type="helix" evidence="30">
    <location>
        <begin position="240"/>
        <end position="260"/>
    </location>
</feature>
<feature type="helix" evidence="30">
    <location>
        <begin position="262"/>
        <end position="265"/>
    </location>
</feature>
<feature type="helix" evidence="30">
    <location>
        <begin position="269"/>
        <end position="289"/>
    </location>
</feature>
<feature type="turn" evidence="30">
    <location>
        <begin position="294"/>
        <end position="297"/>
    </location>
</feature>
<feature type="strand" evidence="30">
    <location>
        <begin position="298"/>
        <end position="301"/>
    </location>
</feature>
<feature type="strand" evidence="30">
    <location>
        <begin position="304"/>
        <end position="308"/>
    </location>
</feature>
<feature type="turn" evidence="30">
    <location>
        <begin position="312"/>
        <end position="314"/>
    </location>
</feature>
<feature type="helix" evidence="30">
    <location>
        <begin position="315"/>
        <end position="318"/>
    </location>
</feature>
<feature type="helix" evidence="30">
    <location>
        <begin position="322"/>
        <end position="332"/>
    </location>
</feature>
<feature type="helix" evidence="30">
    <location>
        <begin position="337"/>
        <end position="348"/>
    </location>
</feature>
<feature type="strand" evidence="28">
    <location>
        <begin position="351"/>
        <end position="353"/>
    </location>
</feature>
<feature type="helix" evidence="30">
    <location>
        <begin position="359"/>
        <end position="380"/>
    </location>
</feature>
<feature type="turn" evidence="30">
    <location>
        <begin position="383"/>
        <end position="388"/>
    </location>
</feature>
<feature type="helix" evidence="30">
    <location>
        <begin position="389"/>
        <end position="417"/>
    </location>
</feature>
<feature type="helix" evidence="30">
    <location>
        <begin position="423"/>
        <end position="429"/>
    </location>
</feature>
<name>NR1I2_HUMAN</name>
<keyword id="KW-0002">3D-structure</keyword>
<keyword id="KW-0010">Activator</keyword>
<keyword id="KW-0025">Alternative splicing</keyword>
<keyword id="KW-0238">DNA-binding</keyword>
<keyword id="KW-0479">Metal-binding</keyword>
<keyword id="KW-0539">Nucleus</keyword>
<keyword id="KW-1267">Proteomics identification</keyword>
<keyword id="KW-0675">Receptor</keyword>
<keyword id="KW-1185">Reference proteome</keyword>
<keyword id="KW-0804">Transcription</keyword>
<keyword id="KW-0805">Transcription regulation</keyword>
<keyword id="KW-0862">Zinc</keyword>
<keyword id="KW-0863">Zinc-finger</keyword>
<evidence type="ECO:0000250" key="1">
    <source>
        <dbReference type="UniProtKB" id="O54915"/>
    </source>
</evidence>
<evidence type="ECO:0000255" key="2">
    <source>
        <dbReference type="PROSITE-ProRule" id="PRU00407"/>
    </source>
</evidence>
<evidence type="ECO:0000255" key="3">
    <source>
        <dbReference type="PROSITE-ProRule" id="PRU01189"/>
    </source>
</evidence>
<evidence type="ECO:0000269" key="4">
    <source>
    </source>
</evidence>
<evidence type="ECO:0000269" key="5">
    <source>
    </source>
</evidence>
<evidence type="ECO:0000269" key="6">
    <source>
    </source>
</evidence>
<evidence type="ECO:0000269" key="7">
    <source>
    </source>
</evidence>
<evidence type="ECO:0000269" key="8">
    <source>
    </source>
</evidence>
<evidence type="ECO:0000269" key="9">
    <source>
    </source>
</evidence>
<evidence type="ECO:0000269" key="10">
    <source>
    </source>
</evidence>
<evidence type="ECO:0000269" key="11">
    <source>
    </source>
</evidence>
<evidence type="ECO:0000269" key="12">
    <source>
    </source>
</evidence>
<evidence type="ECO:0000269" key="13">
    <source>
    </source>
</evidence>
<evidence type="ECO:0000269" key="14">
    <source>
    </source>
</evidence>
<evidence type="ECO:0000269" key="15">
    <source ref="5"/>
</evidence>
<evidence type="ECO:0000269" key="16">
    <source ref="7"/>
</evidence>
<evidence type="ECO:0000303" key="17">
    <source>
    </source>
</evidence>
<evidence type="ECO:0000303" key="18">
    <source ref="5"/>
</evidence>
<evidence type="ECO:0000305" key="19"/>
<evidence type="ECO:0007744" key="20">
    <source>
        <dbReference type="PDB" id="1ILG"/>
    </source>
</evidence>
<evidence type="ECO:0007744" key="21">
    <source>
        <dbReference type="PDB" id="1ILH"/>
    </source>
</evidence>
<evidence type="ECO:0007744" key="22">
    <source>
        <dbReference type="PDB" id="1M13"/>
    </source>
</evidence>
<evidence type="ECO:0007744" key="23">
    <source>
        <dbReference type="PDB" id="1NRL"/>
    </source>
</evidence>
<evidence type="ECO:0007744" key="24">
    <source>
        <dbReference type="PDB" id="1SKX"/>
    </source>
</evidence>
<evidence type="ECO:0007744" key="25">
    <source>
        <dbReference type="PDB" id="2O9I"/>
    </source>
</evidence>
<evidence type="ECO:0007744" key="26">
    <source>
        <dbReference type="PDB" id="2QNV"/>
    </source>
</evidence>
<evidence type="ECO:0007829" key="27">
    <source>
        <dbReference type="PDB" id="1M13"/>
    </source>
</evidence>
<evidence type="ECO:0007829" key="28">
    <source>
        <dbReference type="PDB" id="2QNV"/>
    </source>
</evidence>
<evidence type="ECO:0007829" key="29">
    <source>
        <dbReference type="PDB" id="6DUP"/>
    </source>
</evidence>
<evidence type="ECO:0007829" key="30">
    <source>
        <dbReference type="PDB" id="6TFI"/>
    </source>
</evidence>
<sequence>MEVRPKESWNHADFVHCEDTESVPGKPSVNADEEVGGPQICRVCGDKATGYHFNVMTCEGCKGFFRRAMKRNARLRCPFRKGACEITRKTRRQCQACRLRKCLESGMKKEMIMSDEAVEERRALIKRKKSERTGTQPLGVQGLTEEQRMMIRELMDAQMKTFDTTFSHFKNFRLPGVLSSGCELPESLQAPSREEAAKWSQVRKDLCSLKVSLQLRGEDGSVWNYKPPADSGGKEIFSLLPHMADMSTYMFKGIISFAKVISYFRDLPIEDQISLLKGAAFELCQLRFNTVFNAETGTWECGRLSYCLEDTAGGFQQLLLEPMLKFHYMLKKLQLHEEEYVLMQAISLFSPDRPGVLQHRVVDQLQEQFAITLKSYIECNRPQPAHRFLFLKIMAMLTELRSINAQHTQRLLRIQDIHPFATPLMQELFGITGS</sequence>
<accession>O75469</accession>
<accession>Q006P5</accession>
<accession>Q008C8</accession>
<accession>Q96AC7</accession>
<accession>Q9UJ22</accession>
<accession>Q9UJ23</accession>
<accession>Q9UJ24</accession>
<accession>Q9UJ25</accession>
<accession>Q9UJ26</accession>
<accession>Q9UJ27</accession>
<accession>Q9UNW4</accession>
<gene>
    <name type="primary">NR1I2</name>
    <name type="synonym">PXR</name>
</gene>
<comment type="function">
    <text evidence="4 5 6 12 13 14">Nuclear receptor that binds and is activated by variety of endogenous and xenobiotic compounds. Transcription factor that activates the transcription of multiple genes involved in the metabolism and secretion of potentially harmful xenobiotics, drugs and endogenous compounds. Activated by the antibiotic rifampicin and various plant metabolites, such as hyperforin, guggulipid, colupulone, and isoflavones. Response to specific ligands is species-specific. Activated by naturally occurring steroids, such as pregnenolone and progesterone. Binds to a response element in the promoters of the CYP3A4 and ABCB1/MDR1 genes.</text>
</comment>
<comment type="subunit">
    <text evidence="1 6 8 10 11 12">Heterodimer with RXR. Interacts with NCOA1. Interacts (via domain NR LBD) with CRY1 and CRY2 in a ligand-dependent manner (By similarity).</text>
</comment>
<comment type="interaction">
    <interactant intactId="EBI-3905991">
        <id>O75469</id>
    </interactant>
    <interactant intactId="EBI-352572">
        <id>P08238</id>
        <label>HSP90AB1</label>
    </interactant>
    <organismsDiffer>false</organismsDiffer>
    <experiments>2</experiments>
</comment>
<comment type="interaction">
    <interactant intactId="EBI-3905991">
        <id>O75469</id>
    </interactant>
    <interactant intactId="EBI-455189">
        <id>Q15788</id>
        <label>NCOA1</label>
    </interactant>
    <organismsDiffer>false</organismsDiffer>
    <experiments>5</experiments>
</comment>
<comment type="subcellular location">
    <subcellularLocation>
        <location evidence="2 7">Nucleus</location>
    </subcellularLocation>
</comment>
<comment type="alternative products">
    <event type="alternative splicing"/>
    <isoform>
        <id>O75469-1</id>
        <name>1A</name>
        <name>1</name>
        <name>PRR1-A</name>
        <sequence type="displayed"/>
    </isoform>
    <isoform>
        <id>O75469-2</id>
        <name>1B</name>
        <name>PRR1-B</name>
        <sequence type="described" ref="VSP_003668"/>
    </isoform>
    <isoform>
        <id>O75469-3</id>
        <name>1C</name>
        <name>PRR1-C</name>
        <sequence type="described" ref="VSP_003667"/>
    </isoform>
    <isoform>
        <id>O75469-4</id>
        <name>2A</name>
        <name>2</name>
        <name>PRR2-A</name>
        <sequence type="described" ref="VSP_003669"/>
    </isoform>
    <isoform>
        <id>O75469-5</id>
        <name>2B</name>
        <name>PRR2-B</name>
        <sequence type="described" ref="VSP_003668 VSP_003669"/>
    </isoform>
    <isoform>
        <id>O75469-6</id>
        <name>2C</name>
        <name>PRR2-C</name>
        <sequence type="described" ref="VSP_003667 VSP_003669"/>
    </isoform>
    <isoform>
        <id>O75469-7</id>
        <name>3</name>
        <sequence type="described" ref="VSP_026669"/>
    </isoform>
</comment>
<comment type="tissue specificity">
    <text>Expressed in liver, colon and small intestine.</text>
</comment>
<comment type="similarity">
    <text evidence="19">Belongs to the nuclear hormone receptor family. NR1 subfamily.</text>
</comment>
<reference key="1">
    <citation type="journal article" date="1998" name="Genes Dev.">
        <title>SXR, a novel steroid and xenobiotic-sensing nuclear receptor.</title>
        <authorList>
            <person name="Blumberg B."/>
            <person name="Sabbagh W. Jr."/>
            <person name="Juguilon H."/>
            <person name="Bolado J. Jr."/>
            <person name="van Meter C.M."/>
            <person name="Ong E.S."/>
            <person name="Evans R.M."/>
        </authorList>
    </citation>
    <scope>NUCLEOTIDE SEQUENCE [MRNA] (ISOFORM 1A)</scope>
</reference>
<reference key="2">
    <citation type="journal article" date="1998" name="J. Clin. Invest.">
        <title>The human orphan nuclear receptor PXR is activated by compounds that regulate CYP3A4 gene expression and cause drug interactions.</title>
        <authorList>
            <person name="Lehmann J.M."/>
            <person name="McKee D.D."/>
            <person name="Watson M.A."/>
            <person name="Willson T.M."/>
            <person name="Moore J.T."/>
            <person name="Kliewer S.A."/>
        </authorList>
    </citation>
    <scope>NUCLEOTIDE SEQUENCE [MRNA] (ISOFORM 1A)</scope>
    <scope>FUNCTION</scope>
    <source>
        <tissue>Liver</tissue>
    </source>
</reference>
<reference key="3">
    <citation type="journal article" date="1998" name="Proc. Natl. Acad. Sci. U.S.A.">
        <title>Identification of a human nuclear receptor defines a new signaling pathway for CYP3A induction.</title>
        <authorList>
            <person name="Bertilsson G."/>
            <person name="Heidrich J."/>
            <person name="Svensson K."/>
            <person name="Asman M."/>
            <person name="Jendeberg L."/>
            <person name="Sydow-Baeckman M."/>
            <person name="Ohlsson R."/>
            <person name="Postlind H."/>
            <person name="Blomquist P."/>
            <person name="Berkenstam A."/>
        </authorList>
    </citation>
    <scope>NUCLEOTIDE SEQUENCE [MRNA] (ISOFORMS 1A AND 3)</scope>
    <source>
        <tissue>Liver</tissue>
    </source>
</reference>
<reference key="4">
    <citation type="journal article" date="2001" name="Pharmacogenetics">
        <title>The human pregnane X receptor: genomic structure and identification and functional characterization of natural allelic variants.</title>
        <authorList>
            <person name="Zhang J."/>
            <person name="Kuehl P."/>
            <person name="Green E.D."/>
            <person name="Touchman J.W."/>
            <person name="Watkins P.B."/>
            <person name="Daly A."/>
            <person name="Hall S.D."/>
            <person name="Maurel P."/>
            <person name="Relling M."/>
            <person name="Brimer C."/>
            <person name="Yasuda K."/>
            <person name="Wrighton S.A."/>
            <person name="Hancock M."/>
            <person name="Kim R.B."/>
            <person name="Strom S."/>
            <person name="Thummel K."/>
            <person name="Russell C.G."/>
            <person name="Hudson J.R. Jr."/>
            <person name="Schuetz E.G."/>
            <person name="Boguski M.S."/>
        </authorList>
    </citation>
    <scope>NUCLEOTIDE SEQUENCE [GENOMIC DNA] (ISOFORMS 1A AND 3)</scope>
    <scope>FUNCTION</scope>
    <scope>VARIANTS SER-27; ARG-36 AND GLN-122</scope>
</reference>
<reference key="5">
    <citation type="submission" date="1998-07" db="EMBL/GenBank/DDBJ databases">
        <title>Identification of a novel protein isoform of the human nuclear hormone receptor PXR/SXR and localization to chromosome 3q12.1 -13.3.</title>
        <authorList>
            <person name="Heard D.J."/>
            <person name="Holloway J."/>
            <person name="Hansen C."/>
            <person name="Tommerup N."/>
            <person name="Aagaard L."/>
            <person name="Vissing H."/>
        </authorList>
    </citation>
    <scope>NUCLEOTIDE SEQUENCE [MRNA] (ISOFORMS 1A; 1B; 1C; 2A; 2B AND 2C)</scope>
    <scope>VARIANT THR-12</scope>
    <source>
        <tissue>Liver</tissue>
    </source>
</reference>
<reference key="6">
    <citation type="submission" date="2006-08" db="EMBL/GenBank/DDBJ databases">
        <authorList>
            <person name="Wang X."/>
            <person name="Li J."/>
            <person name="Deng X."/>
            <person name="Chen J."/>
            <person name="Huang M."/>
        </authorList>
    </citation>
    <scope>NUCLEOTIDE SEQUENCE [GENOMIC DNA]</scope>
</reference>
<reference key="7">
    <citation type="submission" date="2007-05" db="EMBL/GenBank/DDBJ databases">
        <authorList>
            <consortium name="SeattleSNPs variation discovery resource"/>
        </authorList>
    </citation>
    <scope>NUCLEOTIDE SEQUENCE [GENOMIC DNA]</scope>
    <scope>VARIANTS LYS-18; SER-27 AND THR-370</scope>
</reference>
<reference key="8">
    <citation type="journal article" date="2004" name="Genome Res.">
        <title>The status, quality, and expansion of the NIH full-length cDNA project: the Mammalian Gene Collection (MGC).</title>
        <authorList>
            <consortium name="The MGC Project Team"/>
        </authorList>
    </citation>
    <scope>NUCLEOTIDE SEQUENCE [LARGE SCALE MRNA] (ISOFORM 1A)</scope>
    <source>
        <tissue>Hepatoma</tissue>
    </source>
</reference>
<reference key="9">
    <citation type="journal article" date="2001" name="J. Biol. Chem.">
        <title>Nuclear receptor response elements mediate induction of intestinal MDR1 by rifampin.</title>
        <authorList>
            <person name="Geick A."/>
            <person name="Eichelbaum M."/>
            <person name="Burk O."/>
        </authorList>
    </citation>
    <scope>FUNCTION</scope>
</reference>
<reference key="10">
    <citation type="journal article" date="2003" name="Mol. Pharmacol.">
        <title>Molecular mechanism of nuclear translocation of an orphan nuclear receptor, SXR.</title>
        <authorList>
            <person name="Kawana K."/>
            <person name="Ikuta T."/>
            <person name="Kobayashi Y."/>
            <person name="Gotoh O."/>
            <person name="Takeda K."/>
            <person name="Kawajiri K."/>
        </authorList>
    </citation>
    <scope>SUBCELLULAR LOCATION</scope>
    <scope>MUTAGENESIS OF 66-ARG-ARG-67 AND 91-ARG-ARG-92</scope>
    <scope>NUCLEAR LOCALIZATION SIGNAL</scope>
</reference>
<reference key="11">
    <citation type="journal article" date="2009" name="J. Nutr.">
        <title>Human CYP3A4 and murine Cyp3A11 are regulated by equol and genistein via the pregnane X receptor in a species-specific manner.</title>
        <authorList>
            <person name="Li Y."/>
            <person name="Ross-Viola J.S."/>
            <person name="Shay N.F."/>
            <person name="Moore D.D."/>
            <person name="Ricketts M.L."/>
        </authorList>
    </citation>
    <scope>FUNCTION</scope>
</reference>
<reference evidence="20 21" key="12">
    <citation type="journal article" date="2001" name="Science">
        <title>The human nuclear xenobiotic receptor PXR: structural determinants of directed promiscuity.</title>
        <authorList>
            <person name="Watkins R.E."/>
            <person name="Wisely G.B."/>
            <person name="Moore L.B."/>
            <person name="Collins J.L."/>
            <person name="Lambert M.H."/>
            <person name="Williams S.P."/>
            <person name="Willson T.M."/>
            <person name="Kliewer S.A."/>
            <person name="Redinbo M.R."/>
        </authorList>
    </citation>
    <scope>X-RAY CRYSTALLOGRAPHY (2.52 ANGSTROMS) OF 130-434 IN COMPLEX WITH THE CHOLESTEROL-LOWERING COMPOUND SR12813</scope>
</reference>
<reference evidence="22" key="13">
    <citation type="journal article" date="2003" name="Biochemistry">
        <title>2.1 A crystal structure of human PXR in complex with the St. John's wort compound hyperforin.</title>
        <authorList>
            <person name="Watkins R.E."/>
            <person name="Maglich J.M."/>
            <person name="Moore L.B."/>
            <person name="Wisely G.B."/>
            <person name="Noble S.M."/>
            <person name="Davis-Searles P.R."/>
            <person name="Lambert M.H."/>
            <person name="Kliewer S.A."/>
            <person name="Redinbo M.R."/>
        </authorList>
    </citation>
    <scope>X-RAY CRYSTALLOGRAPHY (2.15 ANGSTROMS) OF 130-434 IN COMPLEX WITH HYPERFORIN</scope>
    <scope>FUNCTION</scope>
    <scope>INTERACTION WITH NCOA1</scope>
</reference>
<reference evidence="23" key="14">
    <citation type="journal article" date="2003" name="J. Mol. Biol.">
        <title>Coactivator binding promotes the specific interaction between ligand and the pregnane X receptor.</title>
        <authorList>
            <person name="Watkins R.E."/>
            <person name="Davis-Searles P.R."/>
            <person name="Lambert M.H."/>
            <person name="Redinbo M.R."/>
        </authorList>
    </citation>
    <scope>X-RAY CRYSTALLOGRAPHY (2.0 ANGSTROMS) OF 130-434 IN COMPLEX WITH THE CHOLESTEROL-LOWERING COMPOUND SR12813 AND NCOA1</scope>
</reference>
<reference evidence="24" key="15">
    <citation type="journal article" date="2005" name="Mol. Endocrinol.">
        <title>Structural disorder in the complex of human pregnane X receptor and the macrolide antibiotic rifampicin.</title>
        <authorList>
            <person name="Chrencik J.E."/>
            <person name="Orans J."/>
            <person name="Moore L.B."/>
            <person name="Xue Y."/>
            <person name="Peng L."/>
            <person name="Collins J.L."/>
            <person name="Wisely G.B."/>
            <person name="Lambert M.H."/>
            <person name="Kliewer S.A."/>
            <person name="Redinbo M.R."/>
        </authorList>
    </citation>
    <scope>X-RAY CRYSTALLOGRAPHY (2.8 ANGSTROMS) OF 130-431 IN COMPLEX WITH RIFAMPICIN</scope>
</reference>
<reference evidence="25" key="16">
    <citation type="journal article" date="2007" name="Bioorg. Med. Chem.">
        <title>Crystal structure of the PXR-T1317 complex provides a scaffold to examine the potential for receptor antagonism.</title>
        <authorList>
            <person name="Xue Y."/>
            <person name="Chao E."/>
            <person name="Zuercher W.J."/>
            <person name="Willson T.M."/>
            <person name="Collins J.L."/>
            <person name="Redinbo M.R."/>
        </authorList>
    </citation>
    <scope>X-RAY CRYSTALLOGRAPHY (2.8 ANGSTROMS) OF 142-434 IN COMPLEX WITH T0901317 AND NCOA1</scope>
    <scope>INTERACTION WITH NCOA1</scope>
</reference>
<reference evidence="26" key="17">
    <citation type="journal article" date="2008" name="Mol. Pharmacol.">
        <title>Structural basis of human pregnane X receptor activation by the hops constituent colupulone.</title>
        <authorList>
            <person name="Teotico D.G."/>
            <person name="Bischof J.J."/>
            <person name="Peng L."/>
            <person name="Kliewer S.A."/>
            <person name="Redinbo M.R."/>
        </authorList>
    </citation>
    <scope>X-RAY CRYSTALLOGRAPHY (2.8 ANGSTROMS) OF 130-434 IN COMPLEX WITH COLUPULONE</scope>
    <scope>FUNCTION</scope>
</reference>
<reference key="18">
    <citation type="journal article" date="2002" name="Drug Metab. Pharmacokinet.">
        <title>Eleven novel single nucleotide polymorphisms in the NR1I2 (PXR) gene, four of which induce non-synonymous amino acid alterations.</title>
        <authorList>
            <person name="Koyano S."/>
            <person name="Kurose K."/>
            <person name="Ozawa S."/>
            <person name="Saeki M."/>
            <person name="Nakajima Y."/>
            <person name="Hasegawa R."/>
            <person name="Komamura K."/>
            <person name="Ueno K."/>
            <person name="Kamakura S."/>
            <person name="Nakajima T."/>
            <person name="Saito H."/>
            <person name="Kimura H."/>
            <person name="Goto Y."/>
            <person name="Saitoh O."/>
            <person name="Katoh M."/>
            <person name="Ohnuma T."/>
            <person name="Kawai M."/>
            <person name="Sugai K."/>
            <person name="Ohtsuki T."/>
            <person name="Suzuki C."/>
            <person name="Minami N."/>
            <person name="Saito Y."/>
            <person name="Sawada J."/>
        </authorList>
    </citation>
    <scope>VARIANTS CYS-98; GLN-148; TRP-381 AND VAL-403</scope>
</reference>
<proteinExistence type="evidence at protein level"/>
<organism>
    <name type="scientific">Homo sapiens</name>
    <name type="common">Human</name>
    <dbReference type="NCBI Taxonomy" id="9606"/>
    <lineage>
        <taxon>Eukaryota</taxon>
        <taxon>Metazoa</taxon>
        <taxon>Chordata</taxon>
        <taxon>Craniata</taxon>
        <taxon>Vertebrata</taxon>
        <taxon>Euteleostomi</taxon>
        <taxon>Mammalia</taxon>
        <taxon>Eutheria</taxon>
        <taxon>Euarchontoglires</taxon>
        <taxon>Primates</taxon>
        <taxon>Haplorrhini</taxon>
        <taxon>Catarrhini</taxon>
        <taxon>Hominidae</taxon>
        <taxon>Homo</taxon>
    </lineage>
</organism>